<protein>
    <recommendedName>
        <fullName evidence="7">Replication protein A 32 kDa subunit</fullName>
        <shortName evidence="7">RP-A p32</shortName>
    </recommendedName>
    <alternativeName>
        <fullName evidence="7">Replication factor A protein 2</fullName>
        <shortName evidence="7">RF-A protein 2</shortName>
    </alternativeName>
    <alternativeName>
        <fullName evidence="6">Telomeric repeat-binding subunit 2</fullName>
    </alternativeName>
</protein>
<organism>
    <name type="scientific">Tetrahymena thermophila (strain SB210)</name>
    <dbReference type="NCBI Taxonomy" id="312017"/>
    <lineage>
        <taxon>Eukaryota</taxon>
        <taxon>Sar</taxon>
        <taxon>Alveolata</taxon>
        <taxon>Ciliophora</taxon>
        <taxon>Intramacronucleata</taxon>
        <taxon>Oligohymenophorea</taxon>
        <taxon>Hymenostomatida</taxon>
        <taxon>Tetrahymenina</taxon>
        <taxon>Tetrahymenidae</taxon>
        <taxon>Tetrahymena</taxon>
    </lineage>
</organism>
<feature type="chain" id="PRO_0000449914" description="Replication protein A 32 kDa subunit">
    <location>
        <begin position="1"/>
        <end position="269"/>
    </location>
</feature>
<feature type="DNA-binding region" description="OB" evidence="1">
    <location>
        <begin position="69"/>
        <end position="149"/>
    </location>
</feature>
<feature type="region of interest" description="Disordered" evidence="2">
    <location>
        <begin position="1"/>
        <end position="25"/>
    </location>
</feature>
<feature type="compositionally biased region" description="Polar residues" evidence="2">
    <location>
        <begin position="1"/>
        <end position="22"/>
    </location>
</feature>
<feature type="strand" evidence="10">
    <location>
        <begin position="31"/>
        <end position="33"/>
    </location>
</feature>
<feature type="helix" evidence="11">
    <location>
        <begin position="36"/>
        <end position="48"/>
    </location>
</feature>
<feature type="strand" evidence="11">
    <location>
        <begin position="54"/>
        <end position="56"/>
    </location>
</feature>
<feature type="strand" evidence="11">
    <location>
        <begin position="60"/>
        <end position="62"/>
    </location>
</feature>
<feature type="strand" evidence="11">
    <location>
        <begin position="66"/>
        <end position="76"/>
    </location>
</feature>
<feature type="strand" evidence="11">
    <location>
        <begin position="82"/>
        <end position="90"/>
    </location>
</feature>
<feature type="strand" evidence="11">
    <location>
        <begin position="95"/>
        <end position="101"/>
    </location>
</feature>
<feature type="strand" evidence="11">
    <location>
        <begin position="104"/>
        <end position="106"/>
    </location>
</feature>
<feature type="helix" evidence="11">
    <location>
        <begin position="111"/>
        <end position="122"/>
    </location>
</feature>
<feature type="strand" evidence="11">
    <location>
        <begin position="129"/>
        <end position="136"/>
    </location>
</feature>
<feature type="strand" evidence="11">
    <location>
        <begin position="142"/>
        <end position="149"/>
    </location>
</feature>
<feature type="helix" evidence="11">
    <location>
        <begin position="154"/>
        <end position="174"/>
    </location>
</feature>
<evidence type="ECO:0000250" key="1">
    <source>
        <dbReference type="UniProtKB" id="P15927"/>
    </source>
</evidence>
<evidence type="ECO:0000256" key="2">
    <source>
        <dbReference type="SAM" id="MobiDB-lite"/>
    </source>
</evidence>
<evidence type="ECO:0000269" key="3">
    <source>
    </source>
</evidence>
<evidence type="ECO:0000269" key="4">
    <source>
    </source>
</evidence>
<evidence type="ECO:0000269" key="5">
    <source>
    </source>
</evidence>
<evidence type="ECO:0000303" key="6">
    <source>
    </source>
</evidence>
<evidence type="ECO:0000305" key="7"/>
<evidence type="ECO:0000312" key="8">
    <source>
        <dbReference type="EMBL" id="EWS71464.1"/>
    </source>
</evidence>
<evidence type="ECO:0007744" key="9">
    <source>
        <dbReference type="PDB" id="6D6V"/>
    </source>
</evidence>
<evidence type="ECO:0007829" key="10">
    <source>
        <dbReference type="PDB" id="7LMA"/>
    </source>
</evidence>
<evidence type="ECO:0007829" key="11">
    <source>
        <dbReference type="PDB" id="7UY6"/>
    </source>
</evidence>
<sequence>MSNRVQGGFDNNSGNNQSAQKQQAEKIPQITVPLNCFMINQIVKAAKENPQAHSGNHYEWYGAFENAIITAKFEFLQSINDSPKIMGKLSDSTGCIEVVIQKSKMSDELPEFVQAYEIELQNNGNRHKYVRAMLKMRKNAQIQLLYFSIVNDANEISRHGLDLCLRYLQRKHGIEDFMHMTNDKAHNNHNASAQKVHYQIDRNQQPKEQVLELMRQILKHNPNDQIPKSKIIEFFQSQLNQVQINQILQQLVSANEIFSVGSDNYLLNV</sequence>
<dbReference type="EMBL" id="GG662333">
    <property type="protein sequence ID" value="EWS71464.1"/>
    <property type="molecule type" value="Genomic_DNA"/>
</dbReference>
<dbReference type="EMBL" id="BK009378">
    <property type="protein sequence ID" value="DAA64973.1"/>
    <property type="molecule type" value="mRNA"/>
</dbReference>
<dbReference type="RefSeq" id="XP_012656004.1">
    <property type="nucleotide sequence ID" value="XM_012800550.1"/>
</dbReference>
<dbReference type="PDB" id="6D6V">
    <property type="method" value="EM"/>
    <property type="resolution" value="4.80 A"/>
    <property type="chains" value="E=1-269"/>
</dbReference>
<dbReference type="PDB" id="7LMA">
    <property type="method" value="EM"/>
    <property type="resolution" value="3.30 A"/>
    <property type="chains" value="E=1-269"/>
</dbReference>
<dbReference type="PDB" id="7LMB">
    <property type="method" value="EM"/>
    <property type="resolution" value="3.80 A"/>
    <property type="chains" value="E=1-269"/>
</dbReference>
<dbReference type="PDB" id="7UY5">
    <property type="method" value="EM"/>
    <property type="resolution" value="3.50 A"/>
    <property type="chains" value="E=1-269"/>
</dbReference>
<dbReference type="PDB" id="7UY6">
    <property type="method" value="EM"/>
    <property type="resolution" value="2.90 A"/>
    <property type="chains" value="E=1-269"/>
</dbReference>
<dbReference type="PDB" id="8GAP">
    <property type="method" value="EM"/>
    <property type="resolution" value="3.80 A"/>
    <property type="chains" value="E=1-269"/>
</dbReference>
<dbReference type="PDBsum" id="6D6V"/>
<dbReference type="PDBsum" id="7LMA"/>
<dbReference type="PDBsum" id="7LMB"/>
<dbReference type="PDBsum" id="7UY5"/>
<dbReference type="PDBsum" id="7UY6"/>
<dbReference type="PDBsum" id="8GAP"/>
<dbReference type="EMDB" id="EMD-23437"/>
<dbReference type="EMDB" id="EMD-23439"/>
<dbReference type="EMDB" id="EMD-26863"/>
<dbReference type="EMDB" id="EMD-26865"/>
<dbReference type="EMDB" id="EMD-29903"/>
<dbReference type="EMDB" id="EMD-7821"/>
<dbReference type="SMR" id="A0A0U8TRG9"/>
<dbReference type="DIP" id="DIP-61870N"/>
<dbReference type="IntAct" id="A0A0U8TRG9">
    <property type="interactions" value="2"/>
</dbReference>
<dbReference type="STRING" id="312017.W7XFB2"/>
<dbReference type="GeneID" id="24441731"/>
<dbReference type="KEGG" id="tet:TTHERM_001113129"/>
<dbReference type="InParanoid" id="A0A0U8TRG9"/>
<dbReference type="Proteomes" id="UP000009168">
    <property type="component" value="Unassembled WGS sequence"/>
</dbReference>
<dbReference type="GO" id="GO:0000781">
    <property type="term" value="C:chromosome, telomeric region"/>
    <property type="evidence" value="ECO:0007669"/>
    <property type="project" value="UniProtKB-SubCell"/>
</dbReference>
<dbReference type="GO" id="GO:0005662">
    <property type="term" value="C:DNA replication factor A complex"/>
    <property type="evidence" value="ECO:0000314"/>
    <property type="project" value="UniProtKB"/>
</dbReference>
<dbReference type="GO" id="GO:0005697">
    <property type="term" value="C:telomerase holoenzyme complex"/>
    <property type="evidence" value="ECO:0000314"/>
    <property type="project" value="UniProtKB"/>
</dbReference>
<dbReference type="GO" id="GO:0003677">
    <property type="term" value="F:DNA binding"/>
    <property type="evidence" value="ECO:0007669"/>
    <property type="project" value="UniProtKB-KW"/>
</dbReference>
<dbReference type="Gene3D" id="2.40.50.140">
    <property type="entry name" value="Nucleic acid-binding proteins"/>
    <property type="match status" value="1"/>
</dbReference>
<dbReference type="InterPro" id="IPR012340">
    <property type="entry name" value="NA-bd_OB-fold"/>
</dbReference>
<proteinExistence type="evidence at protein level"/>
<comment type="function">
    <text evidence="1 3 4">Component of the heterotrimeric replication protein A (RPA) and holoenzyme telomerase ribonucleoprotein complexes (PubMed:26472759, PubMed:27895115). As part of the RPA complex, binds and stabilizes single-stranded DNA (ssDNA) intermediates, that form during DNA replication or upon DNA stress (By similarity). It prevents their reannealing and in parallel, recruits and activates different proteins and complexes involved in DNA metabolism (By similarity). Thereby, it plays an essential role both in DNA replication and the cellular response to DNA damage (By similarity). In the cellular response to DNA damage, the RPA complex controls DNA repair and DNA damage checkpoint activation (By similarity). Also part of a subcomplex of the holoenzyme telomerase ribonucleoprotein complex: this subcomplex that contains TEB1, RPA2/TEB2, RPA3/TEB3, but not RPA1, mediates the recruitment of telomerase to telomeric DNA via specific interaction between TEB1 and telomeric ssDNA (PubMed:27895115). In the holoenzyme telomerase ribonucleoprotein complex, RPA2/TEB2 and RPA3/TEB3 act as assembly factors for TEB1 incorporation into telomerase holoenzyme (PubMed:27895115). In the holoenzyme telomerase ribonucleoprotein complex, RPA2/TEB2 does not contribute to ssDNA affinity, while it contributes to ssDNA affinity in the RPA complex (PubMed:27895115).</text>
</comment>
<comment type="subunit">
    <text evidence="3 4 5">Component of the replication protein A complex (RPA), a heterotrimeric complex composed of RPA1, RPA2/TEB2 and RPA3/TEB3 (PubMed:27895115). Component of the telomerase holoenzyme complex, composed of the catalytic core (the catalytic subunit TERT, the telomerase RNA template component TER and TAP65/p65), which is associated with two heterotrimeric subcomplexes: (i) the replication protein A (RPA)-related subcomplex, composed of TEB1, RPA2/TEB2 and RPA3/TEB3 and (ii) the CST-like subcomplex, composed of TAP75/p75, TAP45/p45 and TAP19/p19 (PubMed:26472759, PubMed:29775593). TEB1 and the CST-like subcomplex are tethered to the catalytic core by TAP50/p50 (PubMed:26472759, PubMed:29775593).</text>
</comment>
<comment type="subcellular location">
    <subcellularLocation>
        <location evidence="1">Nucleus</location>
    </subcellularLocation>
    <subcellularLocation>
        <location evidence="7">Chromosome</location>
        <location evidence="7">Telomere</location>
    </subcellularLocation>
</comment>
<comment type="similarity">
    <text evidence="7">Belongs to the replication factor A protein 2 family.</text>
</comment>
<gene>
    <name type="primary">RPA2</name>
    <name evidence="6" type="synonym">TEB2</name>
    <name evidence="8" type="ORF">TTHERM_001113129</name>
</gene>
<accession>A0A0U8TRG9</accession>
<accession>W7XFB2</accession>
<name>RFA2_TETTS</name>
<reference key="1">
    <citation type="journal article" date="2006" name="PLoS Biol.">
        <title>Macronuclear genome sequence of the ciliate Tetrahymena thermophila, a model eukaryote.</title>
        <authorList>
            <person name="Eisen J.A."/>
            <person name="Coyne R.S."/>
            <person name="Wu M."/>
            <person name="Wu D."/>
            <person name="Thiagarajan M."/>
            <person name="Wortman J.R."/>
            <person name="Badger J.H."/>
            <person name="Ren Q."/>
            <person name="Amedeo P."/>
            <person name="Jones K.M."/>
            <person name="Tallon L.J."/>
            <person name="Delcher A.L."/>
            <person name="Salzberg S.L."/>
            <person name="Silva J.C."/>
            <person name="Haas B.J."/>
            <person name="Majoros W.H."/>
            <person name="Farzad M."/>
            <person name="Carlton J.M."/>
            <person name="Smith R.K. Jr."/>
            <person name="Garg J."/>
            <person name="Pearlman R.E."/>
            <person name="Karrer K.M."/>
            <person name="Sun L."/>
            <person name="Manning G."/>
            <person name="Elde N.C."/>
            <person name="Turkewitz A.P."/>
            <person name="Asai D.J."/>
            <person name="Wilkes D.E."/>
            <person name="Wang Y."/>
            <person name="Cai H."/>
            <person name="Collins K."/>
            <person name="Stewart B.A."/>
            <person name="Lee S.R."/>
            <person name="Wilamowska K."/>
            <person name="Weinberg Z."/>
            <person name="Ruzzo W.L."/>
            <person name="Wloga D."/>
            <person name="Gaertig J."/>
            <person name="Frankel J."/>
            <person name="Tsao C.-C."/>
            <person name="Gorovsky M.A."/>
            <person name="Keeling P.J."/>
            <person name="Waller R.F."/>
            <person name="Patron N.J."/>
            <person name="Cherry J.M."/>
            <person name="Stover N.A."/>
            <person name="Krieger C.J."/>
            <person name="del Toro C."/>
            <person name="Ryder H.F."/>
            <person name="Williamson S.C."/>
            <person name="Barbeau R.A."/>
            <person name="Hamilton E.P."/>
            <person name="Orias E."/>
        </authorList>
    </citation>
    <scope>NUCLEOTIDE SEQUENCE [LARGE SCALE GENOMIC DNA]</scope>
    <source>
        <strain>SB210</strain>
    </source>
</reference>
<reference key="2">
    <citation type="journal article" date="2015" name="Science">
        <title>Structure of Tetrahymena telomerase reveals previously unknown subunits, functions, and interactions.</title>
        <authorList>
            <person name="Jiang J."/>
            <person name="Chan H."/>
            <person name="Cash D.D."/>
            <person name="Miracco E.J."/>
            <person name="Ogorzalek Loo R.R."/>
            <person name="Upton H.E."/>
            <person name="Cascio D."/>
            <person name="O'Brien Johnson R."/>
            <person name="Collins K."/>
            <person name="Loo J.A."/>
            <person name="Zhou Z.H."/>
            <person name="Feigon J."/>
        </authorList>
    </citation>
    <scope>IDENTIFICATION</scope>
    <scope>FUNCTION</scope>
    <scope>STRUCTURE BY ELECTRON MICROSCOPY OF THE TELOMERASE HOLOENZYME</scope>
</reference>
<reference key="3">
    <citation type="journal article" date="2017" name="J. Biol. Chem.">
        <title>Shared subunits of Tetrahymena telomerase holoenzyme and replication protein A have different functions in different cellular complexes.</title>
        <authorList>
            <person name="Upton H.E."/>
            <person name="Chan H."/>
            <person name="Feigon J."/>
            <person name="Collins K."/>
        </authorList>
    </citation>
    <scope>FUNCTION</scope>
    <scope>IDENTIFICATION IN THE RPA COMPLEX</scope>
    <scope>IDENTIFICATION IN THE TELOMERASE HOLOENZYME COMPLEX</scope>
</reference>
<reference evidence="9" key="4">
    <citation type="journal article" date="2018" name="Cell">
        <title>Structure of telomerase with telomeric DNA.</title>
        <authorList>
            <person name="Jiang J."/>
            <person name="Wang Y."/>
            <person name="Susac L."/>
            <person name="Chan H."/>
            <person name="Basu R."/>
            <person name="Zhou Z.H."/>
            <person name="Feigon J."/>
        </authorList>
    </citation>
    <scope>STRUCTURE BY ELECTRON MICROSCOPY (4.80 ANGSTROMS) OF THE TELOMERASE HOLOENZYME IN COMPLEX WITH TELOMERIC DNA AND TER RNA</scope>
</reference>
<keyword id="KW-0002">3D-structure</keyword>
<keyword id="KW-0158">Chromosome</keyword>
<keyword id="KW-0238">DNA-binding</keyword>
<keyword id="KW-0539">Nucleus</keyword>
<keyword id="KW-1185">Reference proteome</keyword>
<keyword id="KW-0779">Telomere</keyword>